<accession>Q96JE9</accession>
<accession>A7E2A1</accession>
<accession>Q6P3T0</accession>
<accession>Q6ZWB8</accession>
<evidence type="ECO:0000250" key="1"/>
<evidence type="ECO:0000250" key="2">
    <source>
        <dbReference type="UniProtKB" id="Q63560"/>
    </source>
</evidence>
<evidence type="ECO:0000250" key="3">
    <source>
        <dbReference type="UniProtKB" id="Q7TSJ2"/>
    </source>
</evidence>
<evidence type="ECO:0000256" key="4">
    <source>
        <dbReference type="SAM" id="MobiDB-lite"/>
    </source>
</evidence>
<evidence type="ECO:0000269" key="5">
    <source>
    </source>
</evidence>
<evidence type="ECO:0000269" key="6">
    <source>
    </source>
</evidence>
<evidence type="ECO:0000269" key="7">
    <source>
    </source>
</evidence>
<evidence type="ECO:0000269" key="8">
    <source>
    </source>
</evidence>
<evidence type="ECO:0000269" key="9">
    <source>
    </source>
</evidence>
<evidence type="ECO:0000303" key="10">
    <source>
    </source>
</evidence>
<evidence type="ECO:0000303" key="11">
    <source>
    </source>
</evidence>
<evidence type="ECO:0000305" key="12"/>
<protein>
    <recommendedName>
        <fullName>Microtubule-associated protein 6</fullName>
        <shortName>MAP-6</shortName>
    </recommendedName>
    <alternativeName>
        <fullName>Stable tubule-only polypeptide</fullName>
        <shortName>STOP</shortName>
    </alternativeName>
</protein>
<organism>
    <name type="scientific">Homo sapiens</name>
    <name type="common">Human</name>
    <dbReference type="NCBI Taxonomy" id="9606"/>
    <lineage>
        <taxon>Eukaryota</taxon>
        <taxon>Metazoa</taxon>
        <taxon>Chordata</taxon>
        <taxon>Craniata</taxon>
        <taxon>Vertebrata</taxon>
        <taxon>Euteleostomi</taxon>
        <taxon>Mammalia</taxon>
        <taxon>Eutheria</taxon>
        <taxon>Euarchontoglires</taxon>
        <taxon>Primates</taxon>
        <taxon>Haplorrhini</taxon>
        <taxon>Catarrhini</taxon>
        <taxon>Hominidae</taxon>
        <taxon>Homo</taxon>
    </lineage>
</organism>
<comment type="function">
    <text evidence="2 8">Involved in microtubule stabilization in many cell types, including neuronal cells (By similarity). Specifically has microtubule cold stabilizing activity (By similarity). Involved in dendrite morphogenesis and maintenance by regulating lysosomal trafficking via its interaction with TMEM106B (PubMed:24357581). Regulates KIF5A-mediated axonal cargo transport (By similarity). Regulates axonal growth during neuron polarization (By similarity).</text>
</comment>
<comment type="subunit">
    <text evidence="1 8 9">Interacts with calmodulin (via C-terminus); the interaction is dependent on Ca(2+) (By similarity). Interacts (via C-terminus) with TMEM106B (via N-terminus) (PubMed:24357581). Interacts with ZDHHC17 (via ANK repeats) (PubMed:26198635). Interacts with ZDHHC13 (via ANK repeats) (PubMed:26198635).</text>
</comment>
<comment type="subcellular location">
    <subcellularLocation>
        <location evidence="5">Cytoplasm</location>
        <location evidence="5">Cytoskeleton</location>
    </subcellularLocation>
    <subcellularLocation>
        <location evidence="2">Golgi apparatus</location>
    </subcellularLocation>
    <subcellularLocation>
        <location evidence="2">Cell projection</location>
        <location evidence="2">Axon</location>
    </subcellularLocation>
    <subcellularLocation>
        <location evidence="2">Cell projection</location>
        <location evidence="2">Dendrite</location>
    </subcellularLocation>
    <subcellularLocation>
        <location evidence="2">Cytoplasmic vesicle</location>
        <location evidence="2">Secretory vesicle membrane</location>
        <topology evidence="2">Lipid-anchor</topology>
        <orientation evidence="2">Cytoplasmic side</orientation>
    </subcellularLocation>
    <text evidence="2 5">Localizes predominantly in the proximal part of the axon (By similarity). Preferentially is concentrated on a portion of the microtubule polymer in which tubulin is modified by detyrosination and acetylation and is also resistant to depolymerization induced by both nocodazole and cold (By similarity). In unpolarized neurons, localizes to the Golgi and to secretory vesicles accumulating transiently at the tips of a subset of neurites (By similarity). Following neuronal polarization and during axon outgrowth, accumulates in the axonal growth cone and subsequently localizes throughout the axon (By similarity). Partially localizes to dendrites in mature neurons (By similarity). Colocalizes with neurofilament (NF)-rich inclusions in spinal cord and brain neurons of patients with amyotrophic lateral sclerosis (ALS) (PubMed:14692697).</text>
</comment>
<comment type="alternative products">
    <event type="alternative splicing"/>
    <isoform>
        <id>Q96JE9-1</id>
        <name>1</name>
        <name>N-STOP</name>
        <name>Neuronal-STOP</name>
        <sequence type="displayed"/>
    </isoform>
    <isoform>
        <id>Q96JE9-2</id>
        <name>2</name>
        <name>E-STOP</name>
        <name>Early-STOP</name>
        <sequence type="described" ref="VSP_034723"/>
    </isoform>
    <isoform>
        <id>Q96JE9-3</id>
        <name>3</name>
        <sequence type="described" ref="VSP_054151"/>
    </isoform>
</comment>
<comment type="tissue specificity">
    <text evidence="5 7">Expressed in brain (at protein level). Expressed in spinal cord. Isoform 2 expression is up-regulated in the prefrontal cortex (Brodmann's area 46) of patients with schizophrenia (postmortem brain study).</text>
</comment>
<comment type="PTM">
    <text evidence="2">Palmitoylated. Probably depalmitoylated by ABHD17A, ABHD17B and ABHD17C. During neuronal polarization, palmitoylation and depalmitoylation cycles regulate MAP6 shuttling between secretory vesicles and microtubules, and its polarized distribution in the axon.</text>
</comment>
<comment type="similarity">
    <text evidence="12">Belongs to the STOP family.</text>
</comment>
<comment type="sequence caution" evidence="12">
    <conflict type="erroneous initiation">
        <sequence resource="EMBL-CDS" id="AAH63860"/>
    </conflict>
</comment>
<dbReference type="EMBL" id="AK123340">
    <property type="protein sequence ID" value="BAC85586.1"/>
    <property type="molecule type" value="mRNA"/>
</dbReference>
<dbReference type="EMBL" id="AP001922">
    <property type="status" value="NOT_ANNOTATED_CDS"/>
    <property type="molecule type" value="Genomic_DNA"/>
</dbReference>
<dbReference type="EMBL" id="BC063860">
    <property type="protein sequence ID" value="AAH63860.1"/>
    <property type="status" value="ALT_INIT"/>
    <property type="molecule type" value="mRNA"/>
</dbReference>
<dbReference type="EMBL" id="BC139780">
    <property type="protein sequence ID" value="AAI39781.1"/>
    <property type="molecule type" value="mRNA"/>
</dbReference>
<dbReference type="EMBL" id="BC150254">
    <property type="protein sequence ID" value="AAI50255.1"/>
    <property type="molecule type" value="mRNA"/>
</dbReference>
<dbReference type="EMBL" id="AB058781">
    <property type="protein sequence ID" value="BAB47507.1"/>
    <property type="molecule type" value="mRNA"/>
</dbReference>
<dbReference type="CCDS" id="CCDS31641.1">
    <molecule id="Q96JE9-1"/>
</dbReference>
<dbReference type="CCDS" id="CCDS44686.1">
    <molecule id="Q96JE9-2"/>
</dbReference>
<dbReference type="RefSeq" id="NP_149052.1">
    <molecule id="Q96JE9-1"/>
    <property type="nucleotide sequence ID" value="NM_033063.2"/>
</dbReference>
<dbReference type="RefSeq" id="NP_997460.1">
    <molecule id="Q96JE9-2"/>
    <property type="nucleotide sequence ID" value="NM_207577.1"/>
</dbReference>
<dbReference type="BioGRID" id="110307">
    <property type="interactions" value="12"/>
</dbReference>
<dbReference type="FunCoup" id="Q96JE9">
    <property type="interactions" value="190"/>
</dbReference>
<dbReference type="IntAct" id="Q96JE9">
    <property type="interactions" value="9"/>
</dbReference>
<dbReference type="MINT" id="Q96JE9"/>
<dbReference type="STRING" id="9606.ENSP00000307093"/>
<dbReference type="GlyCosmos" id="Q96JE9">
    <property type="glycosylation" value="3 sites, 1 glycan"/>
</dbReference>
<dbReference type="GlyGen" id="Q96JE9">
    <property type="glycosylation" value="6 sites, 1 O-linked glycan (5 sites)"/>
</dbReference>
<dbReference type="iPTMnet" id="Q96JE9"/>
<dbReference type="PhosphoSitePlus" id="Q96JE9"/>
<dbReference type="SwissPalm" id="Q96JE9"/>
<dbReference type="BioMuta" id="MAP6"/>
<dbReference type="DMDM" id="205830862"/>
<dbReference type="jPOST" id="Q96JE9"/>
<dbReference type="MassIVE" id="Q96JE9"/>
<dbReference type="PaxDb" id="9606-ENSP00000307093"/>
<dbReference type="PeptideAtlas" id="Q96JE9"/>
<dbReference type="ProteomicsDB" id="68473"/>
<dbReference type="ProteomicsDB" id="76951">
    <molecule id="Q96JE9-1"/>
</dbReference>
<dbReference type="ProteomicsDB" id="76952">
    <molecule id="Q96JE9-2"/>
</dbReference>
<dbReference type="Antibodypedia" id="17382">
    <property type="antibodies" value="58 antibodies from 17 providers"/>
</dbReference>
<dbReference type="DNASU" id="4135"/>
<dbReference type="Ensembl" id="ENST00000304771.8">
    <molecule id="Q96JE9-1"/>
    <property type="protein sequence ID" value="ENSP00000307093.3"/>
    <property type="gene ID" value="ENSG00000171533.12"/>
</dbReference>
<dbReference type="Ensembl" id="ENST00000434603.2">
    <molecule id="Q96JE9-2"/>
    <property type="protein sequence ID" value="ENSP00000415108.2"/>
    <property type="gene ID" value="ENSG00000171533.12"/>
</dbReference>
<dbReference type="Ensembl" id="ENST00000526740.3">
    <molecule id="Q96JE9-3"/>
    <property type="protein sequence ID" value="ENSP00000434278.1"/>
    <property type="gene ID" value="ENSG00000171533.12"/>
</dbReference>
<dbReference type="GeneID" id="4135"/>
<dbReference type="KEGG" id="hsa:4135"/>
<dbReference type="MANE-Select" id="ENST00000304771.8">
    <property type="protein sequence ID" value="ENSP00000307093.3"/>
    <property type="RefSeq nucleotide sequence ID" value="NM_033063.2"/>
    <property type="RefSeq protein sequence ID" value="NP_149052.1"/>
</dbReference>
<dbReference type="UCSC" id="uc001owu.4">
    <molecule id="Q96JE9-1"/>
    <property type="organism name" value="human"/>
</dbReference>
<dbReference type="AGR" id="HGNC:6868"/>
<dbReference type="CTD" id="4135"/>
<dbReference type="DisGeNET" id="4135"/>
<dbReference type="GeneCards" id="MAP6"/>
<dbReference type="HGNC" id="HGNC:6868">
    <property type="gene designation" value="MAP6"/>
</dbReference>
<dbReference type="HPA" id="ENSG00000171533">
    <property type="expression patterns" value="Tissue enhanced (brain, choroid plexus, retina)"/>
</dbReference>
<dbReference type="MIM" id="601783">
    <property type="type" value="gene"/>
</dbReference>
<dbReference type="neXtProt" id="NX_Q96JE9"/>
<dbReference type="OpenTargets" id="ENSG00000171533"/>
<dbReference type="PharmGKB" id="PA30614"/>
<dbReference type="VEuPathDB" id="HostDB:ENSG00000171533"/>
<dbReference type="eggNOG" id="ENOG502QS1F">
    <property type="taxonomic scope" value="Eukaryota"/>
</dbReference>
<dbReference type="GeneTree" id="ENSGT00530000063947"/>
<dbReference type="HOGENOM" id="CLU_018049_1_0_1"/>
<dbReference type="InParanoid" id="Q96JE9"/>
<dbReference type="OMA" id="KKPGPAW"/>
<dbReference type="OrthoDB" id="9632339at2759"/>
<dbReference type="PAN-GO" id="Q96JE9">
    <property type="GO annotations" value="10 GO annotations based on evolutionary models"/>
</dbReference>
<dbReference type="PhylomeDB" id="Q96JE9"/>
<dbReference type="TreeFam" id="TF338320"/>
<dbReference type="PathwayCommons" id="Q96JE9"/>
<dbReference type="SignaLink" id="Q96JE9"/>
<dbReference type="BioGRID-ORCS" id="4135">
    <property type="hits" value="13 hits in 1153 CRISPR screens"/>
</dbReference>
<dbReference type="CD-CODE" id="8C2F96ED">
    <property type="entry name" value="Centrosome"/>
</dbReference>
<dbReference type="CD-CODE" id="FB4E32DD">
    <property type="entry name" value="Presynaptic clusters and postsynaptic densities"/>
</dbReference>
<dbReference type="ChiTaRS" id="MAP6">
    <property type="organism name" value="human"/>
</dbReference>
<dbReference type="GeneWiki" id="MAP6"/>
<dbReference type="GenomeRNAi" id="4135"/>
<dbReference type="Pharos" id="Q96JE9">
    <property type="development level" value="Tbio"/>
</dbReference>
<dbReference type="PRO" id="PR:Q96JE9"/>
<dbReference type="Proteomes" id="UP000005640">
    <property type="component" value="Chromosome 11"/>
</dbReference>
<dbReference type="RNAct" id="Q96JE9">
    <property type="molecule type" value="protein"/>
</dbReference>
<dbReference type="Bgee" id="ENSG00000171533">
    <property type="expression patterns" value="Expressed in cortical plate and 157 other cell types or tissues"/>
</dbReference>
<dbReference type="GO" id="GO:0030424">
    <property type="term" value="C:axon"/>
    <property type="evidence" value="ECO:0000318"/>
    <property type="project" value="GO_Central"/>
</dbReference>
<dbReference type="GO" id="GO:0005801">
    <property type="term" value="C:cis-Golgi network"/>
    <property type="evidence" value="ECO:0000318"/>
    <property type="project" value="GO_Central"/>
</dbReference>
<dbReference type="GO" id="GO:0030425">
    <property type="term" value="C:dendrite"/>
    <property type="evidence" value="ECO:0000318"/>
    <property type="project" value="GO_Central"/>
</dbReference>
<dbReference type="GO" id="GO:0005798">
    <property type="term" value="C:Golgi-associated vesicle"/>
    <property type="evidence" value="ECO:0000318"/>
    <property type="project" value="GO_Central"/>
</dbReference>
<dbReference type="GO" id="GO:0005874">
    <property type="term" value="C:microtubule"/>
    <property type="evidence" value="ECO:0000314"/>
    <property type="project" value="UniProtKB"/>
</dbReference>
<dbReference type="GO" id="GO:0048471">
    <property type="term" value="C:perinuclear region of cytoplasm"/>
    <property type="evidence" value="ECO:0000314"/>
    <property type="project" value="UniProtKB"/>
</dbReference>
<dbReference type="GO" id="GO:0030658">
    <property type="term" value="C:transport vesicle membrane"/>
    <property type="evidence" value="ECO:0007669"/>
    <property type="project" value="UniProtKB-SubCell"/>
</dbReference>
<dbReference type="GO" id="GO:0005516">
    <property type="term" value="F:calmodulin binding"/>
    <property type="evidence" value="ECO:0007669"/>
    <property type="project" value="UniProtKB-KW"/>
</dbReference>
<dbReference type="GO" id="GO:0008017">
    <property type="term" value="F:microtubule binding"/>
    <property type="evidence" value="ECO:0000318"/>
    <property type="project" value="GO_Central"/>
</dbReference>
<dbReference type="GO" id="GO:0030705">
    <property type="term" value="P:cytoskeleton-dependent intracellular transport"/>
    <property type="evidence" value="ECO:0000318"/>
    <property type="project" value="GO_Central"/>
</dbReference>
<dbReference type="GO" id="GO:0048813">
    <property type="term" value="P:dendrite morphogenesis"/>
    <property type="evidence" value="ECO:0000315"/>
    <property type="project" value="UniProtKB"/>
</dbReference>
<dbReference type="GO" id="GO:0032418">
    <property type="term" value="P:lysosome localization"/>
    <property type="evidence" value="ECO:0000315"/>
    <property type="project" value="UniProtKB"/>
</dbReference>
<dbReference type="GO" id="GO:0000226">
    <property type="term" value="P:microtubule cytoskeleton organization"/>
    <property type="evidence" value="ECO:0007669"/>
    <property type="project" value="InterPro"/>
</dbReference>
<dbReference type="GO" id="GO:0050772">
    <property type="term" value="P:positive regulation of axonogenesis"/>
    <property type="evidence" value="ECO:0000318"/>
    <property type="project" value="GO_Central"/>
</dbReference>
<dbReference type="GO" id="GO:0070507">
    <property type="term" value="P:regulation of microtubule cytoskeleton organization"/>
    <property type="evidence" value="ECO:0000318"/>
    <property type="project" value="GO_Central"/>
</dbReference>
<dbReference type="InterPro" id="IPR007882">
    <property type="entry name" value="MAP6"/>
</dbReference>
<dbReference type="PANTHER" id="PTHR14759:SF29">
    <property type="entry name" value="MICROTUBULE-ASSOCIATED PROTEIN 6"/>
    <property type="match status" value="1"/>
</dbReference>
<dbReference type="PANTHER" id="PTHR14759">
    <property type="entry name" value="STOP PROTEIN"/>
    <property type="match status" value="1"/>
</dbReference>
<reference key="1">
    <citation type="journal article" date="2004" name="Nat. Genet.">
        <title>Complete sequencing and characterization of 21,243 full-length human cDNAs.</title>
        <authorList>
            <person name="Ota T."/>
            <person name="Suzuki Y."/>
            <person name="Nishikawa T."/>
            <person name="Otsuki T."/>
            <person name="Sugiyama T."/>
            <person name="Irie R."/>
            <person name="Wakamatsu A."/>
            <person name="Hayashi K."/>
            <person name="Sato H."/>
            <person name="Nagai K."/>
            <person name="Kimura K."/>
            <person name="Makita H."/>
            <person name="Sekine M."/>
            <person name="Obayashi M."/>
            <person name="Nishi T."/>
            <person name="Shibahara T."/>
            <person name="Tanaka T."/>
            <person name="Ishii S."/>
            <person name="Yamamoto J."/>
            <person name="Saito K."/>
            <person name="Kawai Y."/>
            <person name="Isono Y."/>
            <person name="Nakamura Y."/>
            <person name="Nagahari K."/>
            <person name="Murakami K."/>
            <person name="Yasuda T."/>
            <person name="Iwayanagi T."/>
            <person name="Wagatsuma M."/>
            <person name="Shiratori A."/>
            <person name="Sudo H."/>
            <person name="Hosoiri T."/>
            <person name="Kaku Y."/>
            <person name="Kodaira H."/>
            <person name="Kondo H."/>
            <person name="Sugawara M."/>
            <person name="Takahashi M."/>
            <person name="Kanda K."/>
            <person name="Yokoi T."/>
            <person name="Furuya T."/>
            <person name="Kikkawa E."/>
            <person name="Omura Y."/>
            <person name="Abe K."/>
            <person name="Kamihara K."/>
            <person name="Katsuta N."/>
            <person name="Sato K."/>
            <person name="Tanikawa M."/>
            <person name="Yamazaki M."/>
            <person name="Ninomiya K."/>
            <person name="Ishibashi T."/>
            <person name="Yamashita H."/>
            <person name="Murakawa K."/>
            <person name="Fujimori K."/>
            <person name="Tanai H."/>
            <person name="Kimata M."/>
            <person name="Watanabe M."/>
            <person name="Hiraoka S."/>
            <person name="Chiba Y."/>
            <person name="Ishida S."/>
            <person name="Ono Y."/>
            <person name="Takiguchi S."/>
            <person name="Watanabe S."/>
            <person name="Yosida M."/>
            <person name="Hotuta T."/>
            <person name="Kusano J."/>
            <person name="Kanehori K."/>
            <person name="Takahashi-Fujii A."/>
            <person name="Hara H."/>
            <person name="Tanase T.-O."/>
            <person name="Nomura Y."/>
            <person name="Togiya S."/>
            <person name="Komai F."/>
            <person name="Hara R."/>
            <person name="Takeuchi K."/>
            <person name="Arita M."/>
            <person name="Imose N."/>
            <person name="Musashino K."/>
            <person name="Yuuki H."/>
            <person name="Oshima A."/>
            <person name="Sasaki N."/>
            <person name="Aotsuka S."/>
            <person name="Yoshikawa Y."/>
            <person name="Matsunawa H."/>
            <person name="Ichihara T."/>
            <person name="Shiohata N."/>
            <person name="Sano S."/>
            <person name="Moriya S."/>
            <person name="Momiyama H."/>
            <person name="Satoh N."/>
            <person name="Takami S."/>
            <person name="Terashima Y."/>
            <person name="Suzuki O."/>
            <person name="Nakagawa S."/>
            <person name="Senoh A."/>
            <person name="Mizoguchi H."/>
            <person name="Goto Y."/>
            <person name="Shimizu F."/>
            <person name="Wakebe H."/>
            <person name="Hishigaki H."/>
            <person name="Watanabe T."/>
            <person name="Sugiyama A."/>
            <person name="Takemoto M."/>
            <person name="Kawakami B."/>
            <person name="Yamazaki M."/>
            <person name="Watanabe K."/>
            <person name="Kumagai A."/>
            <person name="Itakura S."/>
            <person name="Fukuzumi Y."/>
            <person name="Fujimori Y."/>
            <person name="Komiyama M."/>
            <person name="Tashiro H."/>
            <person name="Tanigami A."/>
            <person name="Fujiwara T."/>
            <person name="Ono T."/>
            <person name="Yamada K."/>
            <person name="Fujii Y."/>
            <person name="Ozaki K."/>
            <person name="Hirao M."/>
            <person name="Ohmori Y."/>
            <person name="Kawabata A."/>
            <person name="Hikiji T."/>
            <person name="Kobatake N."/>
            <person name="Inagaki H."/>
            <person name="Ikema Y."/>
            <person name="Okamoto S."/>
            <person name="Okitani R."/>
            <person name="Kawakami T."/>
            <person name="Noguchi S."/>
            <person name="Itoh T."/>
            <person name="Shigeta K."/>
            <person name="Senba T."/>
            <person name="Matsumura K."/>
            <person name="Nakajima Y."/>
            <person name="Mizuno T."/>
            <person name="Morinaga M."/>
            <person name="Sasaki M."/>
            <person name="Togashi T."/>
            <person name="Oyama M."/>
            <person name="Hata H."/>
            <person name="Watanabe M."/>
            <person name="Komatsu T."/>
            <person name="Mizushima-Sugano J."/>
            <person name="Satoh T."/>
            <person name="Shirai Y."/>
            <person name="Takahashi Y."/>
            <person name="Nakagawa K."/>
            <person name="Okumura K."/>
            <person name="Nagase T."/>
            <person name="Nomura N."/>
            <person name="Kikuchi H."/>
            <person name="Masuho Y."/>
            <person name="Yamashita R."/>
            <person name="Nakai K."/>
            <person name="Yada T."/>
            <person name="Nakamura Y."/>
            <person name="Ohara O."/>
            <person name="Isogai T."/>
            <person name="Sugano S."/>
        </authorList>
    </citation>
    <scope>NUCLEOTIDE SEQUENCE [LARGE SCALE MRNA] (ISOFORM 3)</scope>
    <source>
        <tissue>Brain</tissue>
    </source>
</reference>
<reference key="2">
    <citation type="journal article" date="2006" name="Nature">
        <title>Human chromosome 11 DNA sequence and analysis including novel gene identification.</title>
        <authorList>
            <person name="Taylor T.D."/>
            <person name="Noguchi H."/>
            <person name="Totoki Y."/>
            <person name="Toyoda A."/>
            <person name="Kuroki Y."/>
            <person name="Dewar K."/>
            <person name="Lloyd C."/>
            <person name="Itoh T."/>
            <person name="Takeda T."/>
            <person name="Kim D.-W."/>
            <person name="She X."/>
            <person name="Barlow K.F."/>
            <person name="Bloom T."/>
            <person name="Bruford E."/>
            <person name="Chang J.L."/>
            <person name="Cuomo C.A."/>
            <person name="Eichler E."/>
            <person name="FitzGerald M.G."/>
            <person name="Jaffe D.B."/>
            <person name="LaButti K."/>
            <person name="Nicol R."/>
            <person name="Park H.-S."/>
            <person name="Seaman C."/>
            <person name="Sougnez C."/>
            <person name="Yang X."/>
            <person name="Zimmer A.R."/>
            <person name="Zody M.C."/>
            <person name="Birren B.W."/>
            <person name="Nusbaum C."/>
            <person name="Fujiyama A."/>
            <person name="Hattori M."/>
            <person name="Rogers J."/>
            <person name="Lander E.S."/>
            <person name="Sakaki Y."/>
        </authorList>
    </citation>
    <scope>NUCLEOTIDE SEQUENCE [LARGE SCALE GENOMIC DNA]</scope>
</reference>
<reference key="3">
    <citation type="journal article" date="2004" name="Genome Res.">
        <title>The status, quality, and expansion of the NIH full-length cDNA project: the Mammalian Gene Collection (MGC).</title>
        <authorList>
            <consortium name="The MGC Project Team"/>
        </authorList>
    </citation>
    <scope>NUCLEOTIDE SEQUENCE [LARGE SCALE MRNA] (ISOFORMS 1; 2 AND 3)</scope>
    <scope>VARIANT MET-247</scope>
    <source>
        <tissue>PNS</tissue>
    </source>
</reference>
<reference key="4">
    <citation type="journal article" date="2001" name="DNA Res.">
        <title>Prediction of the coding sequences of unidentified human genes. XX. The complete sequences of 100 new cDNA clones from brain which code for large proteins in vitro.</title>
        <authorList>
            <person name="Nagase T."/>
            <person name="Nakayama M."/>
            <person name="Nakajima D."/>
            <person name="Kikuno R."/>
            <person name="Ohara O."/>
        </authorList>
    </citation>
    <scope>NUCLEOTIDE SEQUENCE [LARGE SCALE MRNA] OF 91-813 (ISOFORM 1)</scope>
    <source>
        <tissue>Brain</tissue>
    </source>
</reference>
<reference key="5">
    <citation type="journal article" date="2003" name="J. Neuropathol. Exp. Neurol.">
        <title>Stable tubule only polypeptides (STOP) proteins co-aggregate with spheroid neurofilaments in amyotrophic lateral sclerosis.</title>
        <authorList>
            <person name="Letournel F."/>
            <person name="Bocquet A."/>
            <person name="Dubas F."/>
            <person name="Barthelaix A."/>
            <person name="Eyer J."/>
        </authorList>
    </citation>
    <scope>SUBCELLULAR LOCATION</scope>
    <scope>TISSUE SPECIFICITY</scope>
</reference>
<reference key="6">
    <citation type="journal article" date="2006" name="Schizophr. Res.">
        <title>Genetic and expression analyses of the STOP (MAP6) gene in schizophrenia.</title>
        <authorList>
            <person name="Shimizu H."/>
            <person name="Iwayama Y."/>
            <person name="Yamada K."/>
            <person name="Toyota T."/>
            <person name="Minabe Y."/>
            <person name="Nakamura K."/>
            <person name="Nakajima M."/>
            <person name="Hattori E."/>
            <person name="Mori N."/>
            <person name="Osumi N."/>
            <person name="Yoshikawa T."/>
        </authorList>
    </citation>
    <scope>TISSUE SPECIFICITY</scope>
</reference>
<reference key="7">
    <citation type="journal article" date="2014" name="EMBO J.">
        <title>The FTLD risk factor TMEM106B and MAP6 control dendritic trafficking of lysosomes.</title>
        <authorList>
            <person name="Schwenk B.M."/>
            <person name="Lang C.M."/>
            <person name="Hogl S."/>
            <person name="Tahirovic S."/>
            <person name="Orozco D."/>
            <person name="Rentzsch K."/>
            <person name="Lichtenthaler S.F."/>
            <person name="Hoogenraad C.C."/>
            <person name="Capell A."/>
            <person name="Haass C."/>
            <person name="Edbauer D."/>
        </authorList>
    </citation>
    <scope>FUNCTION</scope>
    <scope>INTERACTION WITH TMEM106B</scope>
</reference>
<reference key="8">
    <citation type="journal article" date="2015" name="J. Biol. Chem.">
        <title>Identification of a novel sequence motif recognized by the ankyrin repeat domain of zDHHC17/13 S-acyltransferases.</title>
        <authorList>
            <person name="Lemonidis K."/>
            <person name="Sanchez-Perez M.C."/>
            <person name="Chamberlain L.H."/>
        </authorList>
    </citation>
    <scope>INTERACTION WITH ZDHHC17 AND ZDHHC13</scope>
    <scope>MUTAGENESIS OF PRO-71</scope>
</reference>
<keyword id="KW-0025">Alternative splicing</keyword>
<keyword id="KW-0112">Calmodulin-binding</keyword>
<keyword id="KW-0966">Cell projection</keyword>
<keyword id="KW-0963">Cytoplasm</keyword>
<keyword id="KW-0968">Cytoplasmic vesicle</keyword>
<keyword id="KW-0206">Cytoskeleton</keyword>
<keyword id="KW-0333">Golgi apparatus</keyword>
<keyword id="KW-0449">Lipoprotein</keyword>
<keyword id="KW-0472">Membrane</keyword>
<keyword id="KW-0493">Microtubule</keyword>
<keyword id="KW-0564">Palmitate</keyword>
<keyword id="KW-0597">Phosphoprotein</keyword>
<keyword id="KW-1267">Proteomics identification</keyword>
<keyword id="KW-1185">Reference proteome</keyword>
<keyword id="KW-0813">Transport</keyword>
<sequence length="813" mass="86505">MAWPCITRACCIARFWNQLDKADIAVPLVFTKYSEATEHPGAPPQPPPPQQQAQPALAPPSARAVAIETQPAQGELDAVARATGPAPGPTGEREPAAGPGRSGPGPGLGSGSTSGPADSVMRQDYRAWKVQRPEPSCRPRSEYQPSDAPFERETQYQKDFRAWPLPRRGDHPWIPKPVQISAASQASAPILGAPKRRPQSQERWPVQAAAEAREQEAAPGGAGGLAAGKASGADERDTRRKAGPAWIVRRAEGLGHEQTPLPAAQAQVQATGPEAGRGRAAADALNRQIREEVASAVSSSYRNEFRAWTDIKPVKPIKAKPQYKPPDDKMVHETSYSAQFKGEASKPTTADNKVIDRRRIRSLYSEPFKEPPKVEKPSVQSSKPKKTSASHKPTRKAKDKQAVSGQAAKKKSAEGPSTTKPDDKEQSKEMNNKLAEAKESLAQPVSDSSKTQGPVATEPDKDQGSVVPGLLKGQGPMVQEPLKKQGSVVPGPPKDLGPMIPLPVKDQDHTVPEPLKNESPVISAPVKDQGPSVPVPPKNQSPMVPAKVKDQGSVVPESLKDQGPRIPEPVKNQAPMVPAPVKDEGPMVSASVKDQGPMVSAPVKDQGPIVPAPVKGEGPIVPAPVKDEGPMVSAPIKDQDPMVPEHPKDESAMATAPIKNQGSMVSEPVKNQGLVVSGPVKDQDVVVPEHAKVHDSAVVAPVKNQGPVVPESVKNQDPILPVLVKDQGPTVLQPPKNQGRIVPEPLKNQVPIVPVPLKDQDPLVPVPAKDQGPAVPEPLKTQGPRDPQLPTVSPLPRVMIPTAPHTEYIESSP</sequence>
<proteinExistence type="evidence at protein level"/>
<name>MAP6_HUMAN</name>
<gene>
    <name type="primary">MAP6</name>
    <name type="synonym">KIAA1878</name>
</gene>
<feature type="chain" id="PRO_0000344044" description="Microtubule-associated protein 6">
    <location>
        <begin position="1"/>
        <end position="813"/>
    </location>
</feature>
<feature type="region of interest" description="Disordered" evidence="4">
    <location>
        <begin position="36"/>
        <end position="283"/>
    </location>
</feature>
<feature type="region of interest" description="Mn 1" evidence="2">
    <location>
        <begin position="118"/>
        <end position="141"/>
    </location>
</feature>
<feature type="region of interest" description="Calmodulin-binding" evidence="2">
    <location>
        <begin position="126"/>
        <end position="140"/>
    </location>
</feature>
<feature type="region of interest" description="Mn 2" evidence="2">
    <location>
        <begin position="153"/>
        <end position="176"/>
    </location>
</feature>
<feature type="region of interest" description="Calmodulin-binding" evidence="2">
    <location>
        <begin position="162"/>
        <end position="176"/>
    </location>
</feature>
<feature type="region of interest" description="Calmodulin-binding" evidence="2">
    <location>
        <begin position="189"/>
        <end position="203"/>
    </location>
</feature>
<feature type="region of interest" description="Mn 3" evidence="2">
    <location>
        <begin position="298"/>
        <end position="321"/>
    </location>
</feature>
<feature type="region of interest" description="Calmodulin-binding" evidence="2">
    <location>
        <begin position="306"/>
        <end position="320"/>
    </location>
</feature>
<feature type="region of interest" description="Disordered" evidence="4">
    <location>
        <begin position="314"/>
        <end position="651"/>
    </location>
</feature>
<feature type="region of interest" description="Calmodulin-binding" evidence="2">
    <location>
        <begin position="357"/>
        <end position="371"/>
    </location>
</feature>
<feature type="region of interest" description="Calmodulin-binding" evidence="2">
    <location>
        <begin position="384"/>
        <end position="398"/>
    </location>
</feature>
<feature type="region of interest" description="Disordered" evidence="4">
    <location>
        <begin position="756"/>
        <end position="813"/>
    </location>
</feature>
<feature type="compositionally biased region" description="Pro residues" evidence="4">
    <location>
        <begin position="41"/>
        <end position="50"/>
    </location>
</feature>
<feature type="compositionally biased region" description="Low complexity" evidence="4">
    <location>
        <begin position="51"/>
        <end position="62"/>
    </location>
</feature>
<feature type="compositionally biased region" description="Gly residues" evidence="4">
    <location>
        <begin position="100"/>
        <end position="112"/>
    </location>
</feature>
<feature type="compositionally biased region" description="Basic and acidic residues" evidence="4">
    <location>
        <begin position="121"/>
        <end position="141"/>
    </location>
</feature>
<feature type="compositionally biased region" description="Basic and acidic residues" evidence="4">
    <location>
        <begin position="149"/>
        <end position="173"/>
    </location>
</feature>
<feature type="compositionally biased region" description="Basic and acidic residues" evidence="4">
    <location>
        <begin position="367"/>
        <end position="376"/>
    </location>
</feature>
<feature type="compositionally biased region" description="Basic residues" evidence="4">
    <location>
        <begin position="383"/>
        <end position="398"/>
    </location>
</feature>
<feature type="compositionally biased region" description="Basic and acidic residues" evidence="4">
    <location>
        <begin position="420"/>
        <end position="439"/>
    </location>
</feature>
<feature type="compositionally biased region" description="Polar residues" evidence="4">
    <location>
        <begin position="443"/>
        <end position="454"/>
    </location>
</feature>
<feature type="compositionally biased region" description="Basic and acidic residues" evidence="4">
    <location>
        <begin position="637"/>
        <end position="651"/>
    </location>
</feature>
<feature type="modified residue" description="Phosphoserine" evidence="3">
    <location>
        <position position="102"/>
    </location>
</feature>
<feature type="modified residue" description="Phosphotyrosine" evidence="3">
    <location>
        <position position="143"/>
    </location>
</feature>
<feature type="modified residue" description="Phosphoserine" evidence="2">
    <location>
        <position position="187"/>
    </location>
</feature>
<feature type="modified residue" description="Phosphoserine" evidence="3">
    <location>
        <position position="812"/>
    </location>
</feature>
<feature type="lipid moiety-binding region" description="S-palmitoyl cysteine" evidence="2">
    <location>
        <position position="5"/>
    </location>
</feature>
<feature type="lipid moiety-binding region" description="S-palmitoyl cysteine" evidence="2">
    <location>
        <position position="10"/>
    </location>
</feature>
<feature type="lipid moiety-binding region" description="S-palmitoyl cysteine" evidence="2">
    <location>
        <position position="11"/>
    </location>
</feature>
<feature type="splice variant" id="VSP_054151" description="In isoform 3." evidence="10 11">
    <location>
        <begin position="1"/>
        <end position="329"/>
    </location>
</feature>
<feature type="splice variant" id="VSP_034723" description="In isoform 2." evidence="11">
    <location>
        <begin position="440"/>
        <end position="813"/>
    </location>
</feature>
<feature type="sequence variant" id="VAR_044542" description="In dbSNP:rs12225010." evidence="6">
    <original>I</original>
    <variation>M</variation>
    <location>
        <position position="247"/>
    </location>
</feature>
<feature type="mutagenesis site" description="Inhibits interaction with ZDHHC13 and ZDHHC17." evidence="9">
    <original>P</original>
    <variation>A</variation>
    <location>
        <position position="71"/>
    </location>
</feature>